<evidence type="ECO:0000250" key="1"/>
<evidence type="ECO:0000255" key="2"/>
<evidence type="ECO:0000256" key="3">
    <source>
        <dbReference type="SAM" id="MobiDB-lite"/>
    </source>
</evidence>
<evidence type="ECO:0000269" key="4">
    <source>
    </source>
</evidence>
<evidence type="ECO:0000305" key="5"/>
<evidence type="ECO:0007829" key="6">
    <source>
        <dbReference type="PDB" id="8B4I"/>
    </source>
</evidence>
<sequence>MVQLTEVEDEHFQQPQVGPEEDDEDFTDTDSEISVDSDYESQETFTDRLYALRDMVSPTTRGWFYHKYSTTTNFVKSTLSFAGRAAWAVSVSGLLIGVPFAIAFAEDQNYAAMEQEARMRELGSDVLTAGGEGQAGTAEKTLAAIGGEGARPAL</sequence>
<dbReference type="EMBL" id="X71021">
    <property type="protein sequence ID" value="CAA50339.1"/>
    <property type="molecule type" value="mRNA"/>
</dbReference>
<dbReference type="EMBL" id="BX908807">
    <property type="protein sequence ID" value="CAF05975.1"/>
    <property type="molecule type" value="Genomic_DNA"/>
</dbReference>
<dbReference type="EMBL" id="CM002238">
    <property type="protein sequence ID" value="EAA27459.1"/>
    <property type="molecule type" value="Genomic_DNA"/>
</dbReference>
<dbReference type="PIR" id="A40669">
    <property type="entry name" value="A40669"/>
</dbReference>
<dbReference type="RefSeq" id="XP_956695.1">
    <property type="nucleotide sequence ID" value="XM_951602.2"/>
</dbReference>
<dbReference type="PDB" id="8B4I">
    <property type="method" value="EM"/>
    <property type="resolution" value="3.32 A"/>
    <property type="chains" value="C/D=1-154"/>
</dbReference>
<dbReference type="PDBsum" id="8B4I"/>
<dbReference type="SMR" id="Q07335"/>
<dbReference type="FunCoup" id="Q07335">
    <property type="interactions" value="245"/>
</dbReference>
<dbReference type="STRING" id="367110.Q07335"/>
<dbReference type="PaxDb" id="5141-EFNCRP00000000419"/>
<dbReference type="EnsemblFungi" id="EAA27459">
    <property type="protein sequence ID" value="EAA27459"/>
    <property type="gene ID" value="NCU00431"/>
</dbReference>
<dbReference type="GeneID" id="3872833"/>
<dbReference type="KEGG" id="ncr:NCU00431"/>
<dbReference type="VEuPathDB" id="FungiDB:NCU00431"/>
<dbReference type="HOGENOM" id="CLU_094333_1_0_1"/>
<dbReference type="InParanoid" id="Q07335"/>
<dbReference type="OrthoDB" id="10016939at2759"/>
<dbReference type="Proteomes" id="UP000001805">
    <property type="component" value="Chromosome 3, Linkage Group III"/>
</dbReference>
<dbReference type="GO" id="GO:0005742">
    <property type="term" value="C:mitochondrial outer membrane translocase complex"/>
    <property type="evidence" value="ECO:0007669"/>
    <property type="project" value="InterPro"/>
</dbReference>
<dbReference type="GO" id="GO:0006886">
    <property type="term" value="P:intracellular protein transport"/>
    <property type="evidence" value="ECO:0007669"/>
    <property type="project" value="InterPro"/>
</dbReference>
<dbReference type="GO" id="GO:0030150">
    <property type="term" value="P:protein import into mitochondrial matrix"/>
    <property type="evidence" value="ECO:0007669"/>
    <property type="project" value="InterPro"/>
</dbReference>
<dbReference type="CDD" id="cd22884">
    <property type="entry name" value="TOM22"/>
    <property type="match status" value="1"/>
</dbReference>
<dbReference type="InterPro" id="IPR005683">
    <property type="entry name" value="Tom22"/>
</dbReference>
<dbReference type="InterPro" id="IPR020951">
    <property type="entry name" value="Tom22_fungi"/>
</dbReference>
<dbReference type="NCBIfam" id="TIGR00986">
    <property type="entry name" value="3a0801s05tom22"/>
    <property type="match status" value="1"/>
</dbReference>
<dbReference type="PANTHER" id="PTHR12504">
    <property type="entry name" value="MITOCHONDRIAL IMPORT RECEPTOR SUBUNIT TOM22"/>
    <property type="match status" value="1"/>
</dbReference>
<dbReference type="PANTHER" id="PTHR12504:SF0">
    <property type="entry name" value="MITOCHONDRIAL IMPORT RECEPTOR SUBUNIT TOM22 HOMOLOG"/>
    <property type="match status" value="1"/>
</dbReference>
<dbReference type="Pfam" id="PF04281">
    <property type="entry name" value="Tom22"/>
    <property type="match status" value="1"/>
</dbReference>
<keyword id="KW-0002">3D-structure</keyword>
<keyword id="KW-0472">Membrane</keyword>
<keyword id="KW-0496">Mitochondrion</keyword>
<keyword id="KW-1000">Mitochondrion outer membrane</keyword>
<keyword id="KW-0653">Protein transport</keyword>
<keyword id="KW-0675">Receptor</keyword>
<keyword id="KW-1185">Reference proteome</keyword>
<keyword id="KW-0811">Translocation</keyword>
<keyword id="KW-0812">Transmembrane</keyword>
<keyword id="KW-1133">Transmembrane helix</keyword>
<keyword id="KW-0813">Transport</keyword>
<gene>
    <name type="primary">tom22</name>
    <name type="synonym">mom22</name>
    <name type="ORF">B13B7.130</name>
    <name type="ORF">NCU00431</name>
</gene>
<protein>
    <recommendedName>
        <fullName>Mitochondrial import receptor subunit tom22</fullName>
    </recommendedName>
    <alternativeName>
        <fullName>MOM22 protein</fullName>
    </alternativeName>
    <alternativeName>
        <fullName>Mitochondrial 22 kDa outer membrane protein</fullName>
    </alternativeName>
    <alternativeName>
        <fullName>Translocase of outer membrane 22 kDa subunit</fullName>
    </alternativeName>
</protein>
<reference key="1">
    <citation type="journal article" date="1993" name="Cell">
        <title>The mitochondrial receptor complex: a central role of MOM22 in mediating preprotein transfer from receptors to the general insertion pore.</title>
        <authorList>
            <person name="Kiebler M."/>
            <person name="Keil P."/>
            <person name="Schneider H."/>
            <person name="van der Klei I.J."/>
            <person name="Pfanner N."/>
            <person name="Neupert W."/>
        </authorList>
    </citation>
    <scope>NUCLEOTIDE SEQUENCE [MRNA]</scope>
    <source>
        <strain>74A</strain>
    </source>
</reference>
<reference key="2">
    <citation type="journal article" date="2003" name="Nucleic Acids Res.">
        <title>What's in the genome of a filamentous fungus? Analysis of the Neurospora genome sequence.</title>
        <authorList>
            <person name="Mannhaupt G."/>
            <person name="Montrone C."/>
            <person name="Haase D."/>
            <person name="Mewes H.-W."/>
            <person name="Aign V."/>
            <person name="Hoheisel J.D."/>
            <person name="Fartmann B."/>
            <person name="Nyakatura G."/>
            <person name="Kempken F."/>
            <person name="Maier J."/>
            <person name="Schulte U."/>
        </authorList>
    </citation>
    <scope>NUCLEOTIDE SEQUENCE [LARGE SCALE GENOMIC DNA]</scope>
    <source>
        <strain>ATCC 24698 / 74-OR23-1A / CBS 708.71 / DSM 1257 / FGSC 987</strain>
    </source>
</reference>
<reference key="3">
    <citation type="journal article" date="2003" name="Nature">
        <title>The genome sequence of the filamentous fungus Neurospora crassa.</title>
        <authorList>
            <person name="Galagan J.E."/>
            <person name="Calvo S.E."/>
            <person name="Borkovich K.A."/>
            <person name="Selker E.U."/>
            <person name="Read N.D."/>
            <person name="Jaffe D.B."/>
            <person name="FitzHugh W."/>
            <person name="Ma L.-J."/>
            <person name="Smirnov S."/>
            <person name="Purcell S."/>
            <person name="Rehman B."/>
            <person name="Elkins T."/>
            <person name="Engels R."/>
            <person name="Wang S."/>
            <person name="Nielsen C.B."/>
            <person name="Butler J."/>
            <person name="Endrizzi M."/>
            <person name="Qui D."/>
            <person name="Ianakiev P."/>
            <person name="Bell-Pedersen D."/>
            <person name="Nelson M.A."/>
            <person name="Werner-Washburne M."/>
            <person name="Selitrennikoff C.P."/>
            <person name="Kinsey J.A."/>
            <person name="Braun E.L."/>
            <person name="Zelter A."/>
            <person name="Schulte U."/>
            <person name="Kothe G.O."/>
            <person name="Jedd G."/>
            <person name="Mewes H.-W."/>
            <person name="Staben C."/>
            <person name="Marcotte E."/>
            <person name="Greenberg D."/>
            <person name="Roy A."/>
            <person name="Foley K."/>
            <person name="Naylor J."/>
            <person name="Stange-Thomann N."/>
            <person name="Barrett R."/>
            <person name="Gnerre S."/>
            <person name="Kamal M."/>
            <person name="Kamvysselis M."/>
            <person name="Mauceli E.W."/>
            <person name="Bielke C."/>
            <person name="Rudd S."/>
            <person name="Frishman D."/>
            <person name="Krystofova S."/>
            <person name="Rasmussen C."/>
            <person name="Metzenberg R.L."/>
            <person name="Perkins D.D."/>
            <person name="Kroken S."/>
            <person name="Cogoni C."/>
            <person name="Macino G."/>
            <person name="Catcheside D.E.A."/>
            <person name="Li W."/>
            <person name="Pratt R.J."/>
            <person name="Osmani S.A."/>
            <person name="DeSouza C.P.C."/>
            <person name="Glass N.L."/>
            <person name="Orbach M.J."/>
            <person name="Berglund J.A."/>
            <person name="Voelker R."/>
            <person name="Yarden O."/>
            <person name="Plamann M."/>
            <person name="Seiler S."/>
            <person name="Dunlap J.C."/>
            <person name="Radford A."/>
            <person name="Aramayo R."/>
            <person name="Natvig D.O."/>
            <person name="Alex L.A."/>
            <person name="Mannhaupt G."/>
            <person name="Ebbole D.J."/>
            <person name="Freitag M."/>
            <person name="Paulsen I."/>
            <person name="Sachs M.S."/>
            <person name="Lander E.S."/>
            <person name="Nusbaum C."/>
            <person name="Birren B.W."/>
        </authorList>
    </citation>
    <scope>NUCLEOTIDE SEQUENCE [LARGE SCALE GENOMIC DNA]</scope>
    <source>
        <strain>ATCC 24698 / 74-OR23-1A / CBS 708.71 / DSM 1257 / FGSC 987</strain>
    </source>
</reference>
<reference key="4">
    <citation type="journal article" date="1995" name="EMBO J.">
        <title>MOM22 is a receptor for mitochondrial targeting sequences and cooperates with MOM19.</title>
        <authorList>
            <person name="Mayer A."/>
            <person name="Nargans F.E."/>
            <person name="Neupert W."/>
            <person name="Lill R."/>
        </authorList>
    </citation>
    <scope>FUNCTION</scope>
</reference>
<proteinExistence type="evidence at protein level"/>
<organism>
    <name type="scientific">Neurospora crassa (strain ATCC 24698 / 74-OR23-1A / CBS 708.71 / DSM 1257 / FGSC 987)</name>
    <dbReference type="NCBI Taxonomy" id="367110"/>
    <lineage>
        <taxon>Eukaryota</taxon>
        <taxon>Fungi</taxon>
        <taxon>Dikarya</taxon>
        <taxon>Ascomycota</taxon>
        <taxon>Pezizomycotina</taxon>
        <taxon>Sordariomycetes</taxon>
        <taxon>Sordariomycetidae</taxon>
        <taxon>Sordariales</taxon>
        <taxon>Sordariaceae</taxon>
        <taxon>Neurospora</taxon>
    </lineage>
</organism>
<feature type="chain" id="PRO_0000076111" description="Mitochondrial import receptor subunit tom22">
    <location>
        <begin position="1"/>
        <end position="154"/>
    </location>
</feature>
<feature type="topological domain" description="Cytoplasmic" evidence="2">
    <location>
        <begin position="1"/>
        <end position="84"/>
    </location>
</feature>
<feature type="transmembrane region" description="Helical" evidence="2">
    <location>
        <begin position="85"/>
        <end position="105"/>
    </location>
</feature>
<feature type="topological domain" description="Mitochondrial intermembrane" evidence="2">
    <location>
        <begin position="106"/>
        <end position="154"/>
    </location>
</feature>
<feature type="region of interest" description="Disordered" evidence="3">
    <location>
        <begin position="1"/>
        <end position="31"/>
    </location>
</feature>
<feature type="compositionally biased region" description="Acidic residues" evidence="3">
    <location>
        <begin position="19"/>
        <end position="31"/>
    </location>
</feature>
<feature type="helix" evidence="6">
    <location>
        <begin position="64"/>
        <end position="121"/>
    </location>
</feature>
<name>TOM22_NEUCR</name>
<comment type="function">
    <text evidence="1 4">Central component of the receptor complex responsible for the recognition and translocation of cytosolically synthesized mitochondrial preproteins. Together with tom20 functions as the transit peptide receptor at the surface of the mitochondrion outer membrane and facilitates the movement of preproteins into the translocation pore. Docks tom20 and tom70 for interaction with the general TOM40 import pore (GIP) complex. May regulate the TOM machinery organization, stability and channel gating (By similarity).</text>
</comment>
<comment type="subunit">
    <text evidence="1">Forms part of the preprotein translocase complex of the outer mitochondrial membrane (TOM complex) which consists of at least 8 different proteins (tom5, tom6, tom7, tom20, tom22, tom37, tom40 and tom70). Interacts with tom20 and tom70 (By similarity).</text>
</comment>
<comment type="subcellular location">
    <subcellularLocation>
        <location>Mitochondrion outer membrane</location>
        <topology>Single-pass type II membrane protein</topology>
    </subcellularLocation>
</comment>
<comment type="domain">
    <text evidence="1">Its cytoplasmic domain associates with the cytoplasmic domains of tom20 and tom70. Its intermembrane space domain provides a trans binding site for presequences and the single membrane anchor is required for a stable interaction between the GIP complex proteins (By similarity).</text>
</comment>
<comment type="similarity">
    <text evidence="5">Belongs to the Tom22 family.</text>
</comment>
<accession>Q07335</accession>
<accession>Q7RXS8</accession>